<reference key="1">
    <citation type="journal article" date="2004" name="Genome Res.">
        <title>The genome sequence of Mycoplasma mycoides subsp. mycoides SC type strain PG1T, the causative agent of contagious bovine pleuropneumonia (CBPP).</title>
        <authorList>
            <person name="Westberg J."/>
            <person name="Persson A."/>
            <person name="Holmberg A."/>
            <person name="Goesmann A."/>
            <person name="Lundeberg J."/>
            <person name="Johansson K.-E."/>
            <person name="Pettersson B."/>
            <person name="Uhlen M."/>
        </authorList>
    </citation>
    <scope>NUCLEOTIDE SEQUENCE [LARGE SCALE GENOMIC DNA]</scope>
    <source>
        <strain>CCUG 32753 / NCTC 10114 / PG1</strain>
    </source>
</reference>
<feature type="chain" id="PRO_0000320858" description="Protein translocase subunit SecA">
    <location>
        <begin position="1"/>
        <end position="944"/>
    </location>
</feature>
<feature type="region of interest" description="Disordered" evidence="2">
    <location>
        <begin position="920"/>
        <end position="944"/>
    </location>
</feature>
<feature type="compositionally biased region" description="Basic and acidic residues" evidence="2">
    <location>
        <begin position="933"/>
        <end position="944"/>
    </location>
</feature>
<feature type="binding site" evidence="1">
    <location>
        <position position="77"/>
    </location>
    <ligand>
        <name>ATP</name>
        <dbReference type="ChEBI" id="CHEBI:30616"/>
    </ligand>
</feature>
<feature type="binding site" evidence="1">
    <location>
        <begin position="95"/>
        <end position="99"/>
    </location>
    <ligand>
        <name>ATP</name>
        <dbReference type="ChEBI" id="CHEBI:30616"/>
    </ligand>
</feature>
<feature type="binding site" evidence="1">
    <location>
        <position position="484"/>
    </location>
    <ligand>
        <name>ATP</name>
        <dbReference type="ChEBI" id="CHEBI:30616"/>
    </ligand>
</feature>
<protein>
    <recommendedName>
        <fullName evidence="1">Protein translocase subunit SecA</fullName>
        <ecNumber evidence="1">7.4.2.8</ecNumber>
    </recommendedName>
</protein>
<name>SECA_MYCMS</name>
<proteinExistence type="inferred from homology"/>
<gene>
    <name evidence="1" type="primary">secA</name>
    <name type="ordered locus">MSC_0089</name>
</gene>
<sequence length="944" mass="107797">MVSDRRLLKKFGKIADKIIALEPQMRQLKDEDFILKTQEFKQMLENGKSLDDILIEVYAVAREAARRVLGLNAYKMQLIGGIILNSGDIAEMRTGEGKTLTGIFPAYLNALSGKGVHIVTVNEYLSRRDSEINGKVFDLLGISVGLNGSSLTKTEKREAYNKDITYTTNAELGFDYLRDNMVSDYSLKVQRKLNYCIIDEADSVLIDEARTPLIISGGTSTRINLYKAANNFALTLKEHDDLDIDLESKQVYLNEQGMKKANEFFSLKNLFAIENTEIFHLIMNALKAQFAFKEGVEYTVRDNEILLIDQFTGRIMHGRSYSDGLQQALQAKENVDIEEETVTLATITYQNFYRLYSKIAGMTGTAKTEEEEFIKIYNTRVIQTPTNKPVIRKDEPDLTFGTKNAALKKLVEDVLEAHKKGAPILIGTTSVESSEQIARYLKKANLKFETINAKNHDREAEIVAKAGEIGAITLATNMAGRGTDIKLAKGVAELGGLRVFGVERNEARRIDNQLRGRSGRQGDPGLSRFYISMDDDLMMRFTAPKTRQRFKALGDDYIKSKMFTRAVTNAQKKLEGMNFDQRKNVLDYDNILAQQREIIYAQRDDILEANDLSVVIEKMQITAAYELIEKHSTLVHGEKTINKKELLEVIDGILVPKNKFRIDDFNNKEKMDLAVEIAEAMMQLYKARISDIPDDVIIVMERKIILDAFDKHWTKHLDIAGKLKSGIYLQQYAQNNPLAIYIEQATNLFNKMKINIANEVVENLANVILRVVEDEEQREERIEVTDKDIEEILFETGLQPSDINNKAINQRFDELEEEFKDDKQKLRRLRIQRDVMLGLVLELERRAEMIISPQNDQQAITQLIKELQNDIDIASITIDQIHQNFNNMVEQINDPEKLKHLVIAKDVLLQLVARMDDIKEQEKQTRKKKKKKPHEDESSKTKIG</sequence>
<organism>
    <name type="scientific">Mycoplasma mycoides subsp. mycoides SC (strain CCUG 32753 / NCTC 10114 / PG1)</name>
    <dbReference type="NCBI Taxonomy" id="272632"/>
    <lineage>
        <taxon>Bacteria</taxon>
        <taxon>Bacillati</taxon>
        <taxon>Mycoplasmatota</taxon>
        <taxon>Mollicutes</taxon>
        <taxon>Mycoplasmataceae</taxon>
        <taxon>Mycoplasma</taxon>
    </lineage>
</organism>
<keyword id="KW-0067">ATP-binding</keyword>
<keyword id="KW-1003">Cell membrane</keyword>
<keyword id="KW-0963">Cytoplasm</keyword>
<keyword id="KW-0472">Membrane</keyword>
<keyword id="KW-0547">Nucleotide-binding</keyword>
<keyword id="KW-0653">Protein transport</keyword>
<keyword id="KW-1185">Reference proteome</keyword>
<keyword id="KW-1278">Translocase</keyword>
<keyword id="KW-0811">Translocation</keyword>
<keyword id="KW-0813">Transport</keyword>
<comment type="function">
    <text evidence="1">Part of the Sec protein translocase complex. Interacts with the SecYEG preprotein conducting channel. Has a central role in coupling the hydrolysis of ATP to the transfer of proteins into and across the cell membrane, serving as an ATP-driven molecular motor driving the stepwise translocation of polypeptide chains across the membrane.</text>
</comment>
<comment type="catalytic activity">
    <reaction evidence="1">
        <text>ATP + H2O + cellular proteinSide 1 = ADP + phosphate + cellular proteinSide 2.</text>
        <dbReference type="EC" id="7.4.2.8"/>
    </reaction>
</comment>
<comment type="subunit">
    <text evidence="1">Monomer and homodimer. Part of the essential Sec protein translocation apparatus which comprises SecA, SecYEG and auxiliary proteins SecDF. Other proteins may also be involved.</text>
</comment>
<comment type="subcellular location">
    <subcellularLocation>
        <location evidence="1">Cell membrane</location>
        <topology evidence="1">Peripheral membrane protein</topology>
        <orientation evidence="1">Cytoplasmic side</orientation>
    </subcellularLocation>
    <subcellularLocation>
        <location evidence="1">Cytoplasm</location>
    </subcellularLocation>
    <text evidence="1">Distribution is 50-50.</text>
</comment>
<comment type="similarity">
    <text evidence="1">Belongs to the SecA family.</text>
</comment>
<accession>Q6MUE3</accession>
<evidence type="ECO:0000255" key="1">
    <source>
        <dbReference type="HAMAP-Rule" id="MF_01382"/>
    </source>
</evidence>
<evidence type="ECO:0000256" key="2">
    <source>
        <dbReference type="SAM" id="MobiDB-lite"/>
    </source>
</evidence>
<dbReference type="EC" id="7.4.2.8" evidence="1"/>
<dbReference type="EMBL" id="BX293980">
    <property type="protein sequence ID" value="CAE76741.1"/>
    <property type="molecule type" value="Genomic_DNA"/>
</dbReference>
<dbReference type="RefSeq" id="NP_975099.1">
    <property type="nucleotide sequence ID" value="NC_005364.2"/>
</dbReference>
<dbReference type="RefSeq" id="WP_011166299.1">
    <property type="nucleotide sequence ID" value="NC_005364.2"/>
</dbReference>
<dbReference type="SMR" id="Q6MUE3"/>
<dbReference type="STRING" id="272632.MSC_0089"/>
<dbReference type="KEGG" id="mmy:MSC_0089"/>
<dbReference type="PATRIC" id="fig|272632.4.peg.92"/>
<dbReference type="eggNOG" id="COG0653">
    <property type="taxonomic scope" value="Bacteria"/>
</dbReference>
<dbReference type="HOGENOM" id="CLU_005314_3_1_14"/>
<dbReference type="Proteomes" id="UP000001016">
    <property type="component" value="Chromosome"/>
</dbReference>
<dbReference type="GO" id="GO:0031522">
    <property type="term" value="C:cell envelope Sec protein transport complex"/>
    <property type="evidence" value="ECO:0007669"/>
    <property type="project" value="TreeGrafter"/>
</dbReference>
<dbReference type="GO" id="GO:0005829">
    <property type="term" value="C:cytosol"/>
    <property type="evidence" value="ECO:0007669"/>
    <property type="project" value="TreeGrafter"/>
</dbReference>
<dbReference type="GO" id="GO:0005886">
    <property type="term" value="C:plasma membrane"/>
    <property type="evidence" value="ECO:0007669"/>
    <property type="project" value="UniProtKB-SubCell"/>
</dbReference>
<dbReference type="GO" id="GO:0005524">
    <property type="term" value="F:ATP binding"/>
    <property type="evidence" value="ECO:0007669"/>
    <property type="project" value="UniProtKB-UniRule"/>
</dbReference>
<dbReference type="GO" id="GO:0008564">
    <property type="term" value="F:protein-exporting ATPase activity"/>
    <property type="evidence" value="ECO:0007669"/>
    <property type="project" value="UniProtKB-EC"/>
</dbReference>
<dbReference type="GO" id="GO:0065002">
    <property type="term" value="P:intracellular protein transmembrane transport"/>
    <property type="evidence" value="ECO:0007669"/>
    <property type="project" value="UniProtKB-UniRule"/>
</dbReference>
<dbReference type="GO" id="GO:0017038">
    <property type="term" value="P:protein import"/>
    <property type="evidence" value="ECO:0007669"/>
    <property type="project" value="InterPro"/>
</dbReference>
<dbReference type="GO" id="GO:0006605">
    <property type="term" value="P:protein targeting"/>
    <property type="evidence" value="ECO:0007669"/>
    <property type="project" value="UniProtKB-UniRule"/>
</dbReference>
<dbReference type="GO" id="GO:0043952">
    <property type="term" value="P:protein transport by the Sec complex"/>
    <property type="evidence" value="ECO:0007669"/>
    <property type="project" value="TreeGrafter"/>
</dbReference>
<dbReference type="CDD" id="cd17928">
    <property type="entry name" value="DEXDc_SecA"/>
    <property type="match status" value="1"/>
</dbReference>
<dbReference type="CDD" id="cd18803">
    <property type="entry name" value="SF2_C_secA"/>
    <property type="match status" value="1"/>
</dbReference>
<dbReference type="FunFam" id="3.40.50.300:FF:000429">
    <property type="entry name" value="Preprotein translocase subunit SecA"/>
    <property type="match status" value="1"/>
</dbReference>
<dbReference type="Gene3D" id="1.10.3060.10">
    <property type="entry name" value="Helical scaffold and wing domains of SecA"/>
    <property type="match status" value="1"/>
</dbReference>
<dbReference type="Gene3D" id="3.40.50.300">
    <property type="entry name" value="P-loop containing nucleotide triphosphate hydrolases"/>
    <property type="match status" value="2"/>
</dbReference>
<dbReference type="Gene3D" id="3.90.1440.10">
    <property type="entry name" value="SecA, preprotein cross-linking domain"/>
    <property type="match status" value="1"/>
</dbReference>
<dbReference type="HAMAP" id="MF_01382">
    <property type="entry name" value="SecA"/>
    <property type="match status" value="1"/>
</dbReference>
<dbReference type="InterPro" id="IPR014001">
    <property type="entry name" value="Helicase_ATP-bd"/>
</dbReference>
<dbReference type="InterPro" id="IPR001650">
    <property type="entry name" value="Helicase_C-like"/>
</dbReference>
<dbReference type="InterPro" id="IPR027417">
    <property type="entry name" value="P-loop_NTPase"/>
</dbReference>
<dbReference type="InterPro" id="IPR000185">
    <property type="entry name" value="SecA"/>
</dbReference>
<dbReference type="InterPro" id="IPR011115">
    <property type="entry name" value="SecA_DEAD"/>
</dbReference>
<dbReference type="InterPro" id="IPR014018">
    <property type="entry name" value="SecA_motor_DEAD"/>
</dbReference>
<dbReference type="InterPro" id="IPR011130">
    <property type="entry name" value="SecA_preprotein_X-link_dom"/>
</dbReference>
<dbReference type="InterPro" id="IPR044722">
    <property type="entry name" value="SecA_SF2_C"/>
</dbReference>
<dbReference type="InterPro" id="IPR011116">
    <property type="entry name" value="SecA_Wing/Scaffold"/>
</dbReference>
<dbReference type="InterPro" id="IPR036266">
    <property type="entry name" value="SecA_Wing/Scaffold_sf"/>
</dbReference>
<dbReference type="InterPro" id="IPR036670">
    <property type="entry name" value="SecA_X-link_sf"/>
</dbReference>
<dbReference type="NCBIfam" id="NF006630">
    <property type="entry name" value="PRK09200.1"/>
    <property type="match status" value="1"/>
</dbReference>
<dbReference type="NCBIfam" id="TIGR00963">
    <property type="entry name" value="secA"/>
    <property type="match status" value="1"/>
</dbReference>
<dbReference type="PANTHER" id="PTHR30612:SF0">
    <property type="entry name" value="CHLOROPLAST PROTEIN-TRANSPORTING ATPASE"/>
    <property type="match status" value="1"/>
</dbReference>
<dbReference type="PANTHER" id="PTHR30612">
    <property type="entry name" value="SECA INNER MEMBRANE COMPONENT OF SEC PROTEIN SECRETION SYSTEM"/>
    <property type="match status" value="1"/>
</dbReference>
<dbReference type="Pfam" id="PF21090">
    <property type="entry name" value="P-loop_SecA"/>
    <property type="match status" value="2"/>
</dbReference>
<dbReference type="Pfam" id="PF07517">
    <property type="entry name" value="SecA_DEAD"/>
    <property type="match status" value="1"/>
</dbReference>
<dbReference type="Pfam" id="PF01043">
    <property type="entry name" value="SecA_PP_bind"/>
    <property type="match status" value="1"/>
</dbReference>
<dbReference type="Pfam" id="PF07516">
    <property type="entry name" value="SecA_SW"/>
    <property type="match status" value="1"/>
</dbReference>
<dbReference type="PRINTS" id="PR00906">
    <property type="entry name" value="SECA"/>
</dbReference>
<dbReference type="SMART" id="SM00957">
    <property type="entry name" value="SecA_DEAD"/>
    <property type="match status" value="1"/>
</dbReference>
<dbReference type="SMART" id="SM00958">
    <property type="entry name" value="SecA_PP_bind"/>
    <property type="match status" value="1"/>
</dbReference>
<dbReference type="SUPFAM" id="SSF81886">
    <property type="entry name" value="Helical scaffold and wing domains of SecA"/>
    <property type="match status" value="1"/>
</dbReference>
<dbReference type="SUPFAM" id="SSF52540">
    <property type="entry name" value="P-loop containing nucleoside triphosphate hydrolases"/>
    <property type="match status" value="2"/>
</dbReference>
<dbReference type="SUPFAM" id="SSF81767">
    <property type="entry name" value="Pre-protein crosslinking domain of SecA"/>
    <property type="match status" value="1"/>
</dbReference>
<dbReference type="PROSITE" id="PS51196">
    <property type="entry name" value="SECA_MOTOR_DEAD"/>
    <property type="match status" value="1"/>
</dbReference>